<dbReference type="EMBL" id="CP000447">
    <property type="protein sequence ID" value="ABI70871.1"/>
    <property type="molecule type" value="Genomic_DNA"/>
</dbReference>
<dbReference type="RefSeq" id="WP_011636492.1">
    <property type="nucleotide sequence ID" value="NC_008345.1"/>
</dbReference>
<dbReference type="PDB" id="6BG8">
    <property type="method" value="X-ray"/>
    <property type="resolution" value="1.60 A"/>
    <property type="chains" value="A/B=656-892"/>
</dbReference>
<dbReference type="PDBsum" id="6BG8"/>
<dbReference type="SMR" id="Q086E4"/>
<dbReference type="STRING" id="318167.Sfri_1018"/>
<dbReference type="KEGG" id="sfr:Sfri_1018"/>
<dbReference type="eggNOG" id="COG4932">
    <property type="taxonomic scope" value="Bacteria"/>
</dbReference>
<dbReference type="eggNOG" id="COG5492">
    <property type="taxonomic scope" value="Bacteria"/>
</dbReference>
<dbReference type="HOGENOM" id="CLU_323877_0_0_6"/>
<dbReference type="Proteomes" id="UP000000684">
    <property type="component" value="Chromosome"/>
</dbReference>
<dbReference type="GO" id="GO:0009279">
    <property type="term" value="C:cell outer membrane"/>
    <property type="evidence" value="ECO:0007669"/>
    <property type="project" value="UniProtKB-SubCell"/>
</dbReference>
<dbReference type="FunFam" id="2.60.40.1080:FF:000001">
    <property type="entry name" value="Bacterial Ig-like domain, group 2"/>
    <property type="match status" value="3"/>
</dbReference>
<dbReference type="Gene3D" id="2.60.40.1080">
    <property type="match status" value="7"/>
</dbReference>
<dbReference type="InterPro" id="IPR003343">
    <property type="entry name" value="Big_2"/>
</dbReference>
<dbReference type="InterPro" id="IPR021884">
    <property type="entry name" value="Ice-bd_prot"/>
</dbReference>
<dbReference type="InterPro" id="IPR008964">
    <property type="entry name" value="Invasin/intimin_cell_adhesion"/>
</dbReference>
<dbReference type="Pfam" id="PF02368">
    <property type="entry name" value="Big_2"/>
    <property type="match status" value="6"/>
</dbReference>
<dbReference type="Pfam" id="PF11999">
    <property type="entry name" value="Ice_binding"/>
    <property type="match status" value="1"/>
</dbReference>
<dbReference type="SMART" id="SM00635">
    <property type="entry name" value="BID_2"/>
    <property type="match status" value="7"/>
</dbReference>
<dbReference type="SUPFAM" id="SSF49373">
    <property type="entry name" value="Invasin/intimin cell-adhesion fragments"/>
    <property type="match status" value="5"/>
</dbReference>
<dbReference type="PROSITE" id="PS51257">
    <property type="entry name" value="PROKAR_LIPOPROTEIN"/>
    <property type="match status" value="1"/>
</dbReference>
<reference evidence="8 9" key="1">
    <citation type="submission" date="2006-08" db="EMBL/GenBank/DDBJ databases">
        <title>Complete sequence of Shewanella frigidimarina NCIMB 400.</title>
        <authorList>
            <consortium name="US DOE Joint Genome Institute"/>
            <person name="Copeland A."/>
            <person name="Lucas S."/>
            <person name="Lapidus A."/>
            <person name="Barry K."/>
            <person name="Detter J.C."/>
            <person name="Glavina del Rio T."/>
            <person name="Hammon N."/>
            <person name="Israni S."/>
            <person name="Dalin E."/>
            <person name="Tice H."/>
            <person name="Pitluck S."/>
            <person name="Fredrickson J.K."/>
            <person name="Kolker E."/>
            <person name="McCuel L.A."/>
            <person name="DiChristina T."/>
            <person name="Nealson K.H."/>
            <person name="Newman D."/>
            <person name="Tiedje J.M."/>
            <person name="Zhou J."/>
            <person name="Romine M.F."/>
            <person name="Culley D.E."/>
            <person name="Serres M."/>
            <person name="Chertkov O."/>
            <person name="Brettin T."/>
            <person name="Bruce D."/>
            <person name="Han C."/>
            <person name="Tapia R."/>
            <person name="Gilna P."/>
            <person name="Schmutz J."/>
            <person name="Larimer F."/>
            <person name="Land M."/>
            <person name="Hauser L."/>
            <person name="Kyrpides N."/>
            <person name="Mikhailova N."/>
            <person name="Richardson P."/>
        </authorList>
    </citation>
    <scope>NUCLEOTIDE SEQUENCE [LARGE SCALE GENOMIC DNA]</scope>
    <source>
        <strain evidence="8 9">NCIMB 400</strain>
    </source>
</reference>
<reference evidence="10" key="2">
    <citation type="journal article" date="2018" name="FEBS J.">
        <title>An ice-binding and tandem beta-sandwich domain-containing protein in Shewanella frigidimarina is a potential new type of ice adhesin.</title>
        <authorList>
            <person name="Vance T.D.R."/>
            <person name="Graham L.A."/>
            <person name="Davies P.L."/>
        </authorList>
    </citation>
    <scope>X-RAY CRYSTALLOGRAPHY (1.60 ANGSTROMS) OF 656-892</scope>
    <scope>FUNCTION</scope>
    <scope>SUBCELLULAR LOCATION</scope>
    <source>
        <strain evidence="5">NCIMB 400</strain>
    </source>
</reference>
<gene>
    <name evidence="8" type="ordered locus">Sfri_1018</name>
</gene>
<feature type="signal peptide" evidence="3">
    <location>
        <begin position="1"/>
        <end position="23"/>
    </location>
</feature>
<feature type="chain" id="PRO_5004166303" description="Ice-binding protein 1" evidence="3">
    <location>
        <begin position="24"/>
        <end position="892"/>
    </location>
</feature>
<feature type="domain" description="BIG2 1" evidence="2">
    <location>
        <begin position="43"/>
        <end position="111"/>
    </location>
</feature>
<feature type="domain" description="BIG2 2" evidence="2">
    <location>
        <begin position="134"/>
        <end position="205"/>
    </location>
</feature>
<feature type="domain" description="BIG2 3" evidence="2">
    <location>
        <begin position="221"/>
        <end position="288"/>
    </location>
</feature>
<feature type="domain" description="BIG2 4" evidence="2">
    <location>
        <begin position="306"/>
        <end position="386"/>
    </location>
</feature>
<feature type="domain" description="BIG2 5" evidence="2">
    <location>
        <begin position="392"/>
        <end position="471"/>
    </location>
</feature>
<feature type="domain" description="BIG2 6" evidence="2">
    <location>
        <begin position="478"/>
        <end position="558"/>
    </location>
</feature>
<feature type="domain" description="BIG2 7" evidence="2">
    <location>
        <begin position="565"/>
        <end position="638"/>
    </location>
</feature>
<feature type="short sequence motif" description="Ice-binding site motif (T-A/G-X-T/N)" evidence="1">
    <location>
        <begin position="866"/>
        <end position="869"/>
    </location>
</feature>
<feature type="site" description="Ice-binding" evidence="1">
    <location>
        <position position="866"/>
    </location>
</feature>
<feature type="lipid moiety-binding region" description="N-palmitoyl cysteine" evidence="3">
    <location>
        <position position="24"/>
    </location>
</feature>
<feature type="lipid moiety-binding region" description="S-diacylglycerol cysteine" evidence="3">
    <location>
        <position position="24"/>
    </location>
</feature>
<feature type="helix" evidence="11">
    <location>
        <begin position="663"/>
        <end position="667"/>
    </location>
</feature>
<feature type="strand" evidence="11">
    <location>
        <begin position="668"/>
        <end position="678"/>
    </location>
</feature>
<feature type="strand" evidence="11">
    <location>
        <begin position="683"/>
        <end position="694"/>
    </location>
</feature>
<feature type="helix" evidence="11">
    <location>
        <begin position="696"/>
        <end position="698"/>
    </location>
</feature>
<feature type="strand" evidence="11">
    <location>
        <begin position="699"/>
        <end position="701"/>
    </location>
</feature>
<feature type="strand" evidence="11">
    <location>
        <begin position="714"/>
        <end position="716"/>
    </location>
</feature>
<feature type="turn" evidence="11">
    <location>
        <begin position="726"/>
        <end position="728"/>
    </location>
</feature>
<feature type="helix" evidence="11">
    <location>
        <begin position="738"/>
        <end position="757"/>
    </location>
</feature>
<feature type="strand" evidence="11">
    <location>
        <begin position="758"/>
        <end position="760"/>
    </location>
</feature>
<feature type="strand" evidence="11">
    <location>
        <begin position="766"/>
        <end position="768"/>
    </location>
</feature>
<feature type="strand" evidence="11">
    <location>
        <begin position="777"/>
        <end position="787"/>
    </location>
</feature>
<feature type="strand" evidence="11">
    <location>
        <begin position="789"/>
        <end position="791"/>
    </location>
</feature>
<feature type="strand" evidence="11">
    <location>
        <begin position="796"/>
        <end position="799"/>
    </location>
</feature>
<feature type="strand" evidence="11">
    <location>
        <begin position="808"/>
        <end position="814"/>
    </location>
</feature>
<feature type="strand" evidence="11">
    <location>
        <begin position="816"/>
        <end position="818"/>
    </location>
</feature>
<feature type="strand" evidence="11">
    <location>
        <begin position="825"/>
        <end position="828"/>
    </location>
</feature>
<feature type="helix" evidence="11">
    <location>
        <begin position="833"/>
        <end position="835"/>
    </location>
</feature>
<feature type="strand" evidence="11">
    <location>
        <begin position="836"/>
        <end position="842"/>
    </location>
</feature>
<feature type="strand" evidence="11">
    <location>
        <begin position="844"/>
        <end position="846"/>
    </location>
</feature>
<feature type="strand" evidence="11">
    <location>
        <begin position="851"/>
        <end position="860"/>
    </location>
</feature>
<feature type="strand" evidence="11">
    <location>
        <begin position="862"/>
        <end position="864"/>
    </location>
</feature>
<feature type="strand" evidence="11">
    <location>
        <begin position="869"/>
        <end position="885"/>
    </location>
</feature>
<feature type="strand" evidence="11">
    <location>
        <begin position="887"/>
        <end position="890"/>
    </location>
</feature>
<proteinExistence type="evidence at protein level"/>
<sequence length="892" mass="89965">MNHSIKKTYLVFTMLLGFILLAGCNGDNNNDNSNNDNNGVLLTSIAVTPATPSMPLGLKQQFTAMGTYSDGTSSDITNSATWSSDDSTVATINGSGLAMGVIPGSVAITASLIDSSSNEQSATTTLTITDATLTALAITPVNPSLAKGLTKQFMATGTYSDGTSPDVTTSVTWSSANTLVATVNASGLASGVAIGSSIITASLGSDETTTELNITDAILSSIALTPVEPSIAKGITQQFTAIGTYSDGISVDITASSNWSSADTLVATMNTSGAAKGVSIGSSIITADFQAQSATSLLTVTDASLTSIMLTPANPHIPKGNTLQLTATGIYSDGISVDITSSAIWSSADTLIATVNADGVVSGITSGSAIITATSAALSATTTVTVTDTTLTSIAVTPGNQTIVKGSNKQLTATGTYSDGSLANITASVTWSSADTLVATVNNSGLASGIETGSSLISASSGALSGSTNLTITGAALNSIVVSPTNLSLVKGMNKQFAATATYSDGSVADISTSVTWSSADTLVATIDVNGLANGKAAGSSLITATSGAQSNSTNLTVTDATLNSIDVTPINPSIIKNSSQNFVATGHYSDGSTTNITSTVMWSSADTLVATLNPNEQLNSGRATAIEVGSSVIQASLSGVFADTTLNVTAALPNNPLAPELGEVARFAMLASQAITTTSGSAIVDGDLGILDQARSYYAGFTPGVNAGEFDELTNGLSYAGDDSTPPYVVPVPYASMVAFINQSRTDLGIAYNFLAADPNPNAATQVCPIELGNLTLTRGVYKTAADVTLQTGTLTLDGEGDPDSVFIFTIGGNLTSGAPGGDIVLINGAQAKNIYWRTAGKTVIGTNTNFSGNVFAWSEVNVRTGANVTGRLFAVTDQVTLDANAVTKAN</sequence>
<organism evidence="8">
    <name type="scientific">Shewanella frigidimarina (strain NCIMB 400)</name>
    <dbReference type="NCBI Taxonomy" id="318167"/>
    <lineage>
        <taxon>Bacteria</taxon>
        <taxon>Pseudomonadati</taxon>
        <taxon>Pseudomonadota</taxon>
        <taxon>Gammaproteobacteria</taxon>
        <taxon>Alteromonadales</taxon>
        <taxon>Shewanellaceae</taxon>
        <taxon>Shewanella</taxon>
    </lineage>
</organism>
<keyword id="KW-0002">3D-structure</keyword>
<keyword id="KW-0047">Antifreeze protein</keyword>
<keyword id="KW-0998">Cell outer membrane</keyword>
<keyword id="KW-0449">Lipoprotein</keyword>
<keyword id="KW-0472">Membrane</keyword>
<keyword id="KW-0564">Palmitate</keyword>
<keyword id="KW-1185">Reference proteome</keyword>
<keyword id="KW-0732">Signal</keyword>
<accession>Q086E4</accession>
<evidence type="ECO:0000250" key="1">
    <source>
        <dbReference type="UniProtKB" id="H7FWB6"/>
    </source>
</evidence>
<evidence type="ECO:0000255" key="2"/>
<evidence type="ECO:0000255" key="3">
    <source>
        <dbReference type="PROSITE-ProRule" id="PRU00303"/>
    </source>
</evidence>
<evidence type="ECO:0000269" key="4">
    <source>
    </source>
</evidence>
<evidence type="ECO:0000303" key="5">
    <source>
    </source>
</evidence>
<evidence type="ECO:0000305" key="6"/>
<evidence type="ECO:0000305" key="7">
    <source>
    </source>
</evidence>
<evidence type="ECO:0000312" key="8">
    <source>
        <dbReference type="EMBL" id="ABI70871.1"/>
    </source>
</evidence>
<evidence type="ECO:0000312" key="9">
    <source>
        <dbReference type="Proteomes" id="UP000000684"/>
    </source>
</evidence>
<evidence type="ECO:0007744" key="10">
    <source>
        <dbReference type="PDB" id="6BG8"/>
    </source>
</evidence>
<evidence type="ECO:0007829" key="11">
    <source>
        <dbReference type="PDB" id="6BG8"/>
    </source>
</evidence>
<name>IBP1_SHEFN</name>
<protein>
    <recommendedName>
        <fullName evidence="5">Ice-binding protein 1</fullName>
    </recommendedName>
    <alternativeName>
        <fullName evidence="6">Antifreeze protein 1</fullName>
        <shortName evidence="6">AFP 1</shortName>
    </alternativeName>
    <alternativeName>
        <fullName evidence="5">Ice adhesin 1</fullName>
    </alternativeName>
</protein>
<comment type="function">
    <text evidence="4">Ice-binding adhesion protein that adsorbs this bacterium onto ice to maintain a favorable position in its aquatic habitat. Inhibits growth of the ice crystals. Has high thermal hysteresis (TH) activity, which is the ability to lower the freezing point of an aqueous solution below its melting point. The TH activity of this protein is approximately 1.4 degrees Celsius at 25 uM and little below 2 degrees Celsius at 80 uM.</text>
</comment>
<comment type="subcellular location">
    <subcellularLocation>
        <location evidence="7">Cell outer membrane</location>
        <topology evidence="3">Lipid-anchor</topology>
        <orientation evidence="7">Extracellular side</orientation>
    </subcellularLocation>
</comment>
<comment type="similarity">
    <text evidence="6">Belongs to the ice-binding protein family.</text>
</comment>